<gene>
    <name evidence="29" type="primary">lin-28</name>
    <name evidence="29" type="ORF">F02E9.2</name>
</gene>
<keyword id="KW-0025">Alternative splicing</keyword>
<keyword id="KW-0963">Cytoplasm</keyword>
<keyword id="KW-0217">Developmental protein</keyword>
<keyword id="KW-0479">Metal-binding</keyword>
<keyword id="KW-1185">Reference proteome</keyword>
<keyword id="KW-0677">Repeat</keyword>
<keyword id="KW-0862">Zinc</keyword>
<keyword id="KW-0863">Zinc-finger</keyword>
<accession>P92186</accession>
<accession>Q9U3K6</accession>
<comment type="function">
    <text evidence="4 6 7 10 11 12 14 15 16 17 18 19 20 21 22 23 24 25 26 27">Heterochronic protein which controls the choice of stage specific cell fates (PubMed:10706289, PubMed:12871707, PubMed:15073154, PubMed:16139228, PubMed:1916265, PubMed:2628162, PubMed:2702689, PubMed:6494891, PubMed:7671811, PubMed:8625405, PubMed:8756295, PubMed:8756296, PubMed:9054503, PubMed:9477318, PubMed:9649524). Regulates the timing of the second larval stage events (L2 events) in the hypodermis (PubMed:2628162, PubMed:2702689). May negatively regulate the larval to adult transition via the suppression of the microRNA (miRNA) let-7 during L3 (PubMed:10706289, PubMed:12871707, PubMed:16139228). Through this regulatory role, controls the timing of the sexual maturation of the nervous system (PubMed:31264582). Also has a role in the fox-1-sex-1-mediated determination of sexual fate (PubMed:21471153). Plays a role in governing the developmental timing of male tail tip morphogenesis (PubMed:26811380, PubMed:30956008). Plays a role in controlling the seam cell number during larval stages (PubMed:21471153, PubMed:28602583). Plays a role in vulval development (PubMed:28602583).</text>
</comment>
<comment type="subunit">
    <text evidence="18">Component of a complex at least containing lep-2, lin-28 and the long non-coding RNA lep-5, which mediates the degradation of lin-28.</text>
</comment>
<comment type="interaction">
    <interactant intactId="EBI-15801711">
        <id>P92186-2</id>
    </interactant>
    <interactant intactId="EBI-15801698">
        <id>Q09408</id>
        <label>pup-2</label>
    </interactant>
    <organismsDiffer>false</organismsDiffer>
    <experiments>2</experiments>
</comment>
<comment type="subcellular location">
    <subcellularLocation>
        <location evidence="15 25">Cytoplasm</location>
    </subcellularLocation>
</comment>
<comment type="alternative products">
    <event type="alternative splicing"/>
    <isoform>
        <id>P92186-1</id>
        <name evidence="29">a</name>
        <sequence type="displayed"/>
    </isoform>
    <isoform>
        <id>P92186-2</id>
        <name evidence="30">b</name>
        <sequence type="described" ref="VSP_021122 VSP_021123"/>
    </isoform>
</comment>
<comment type="developmental stage">
    <text evidence="5 9 10 12 15 18 19 25">Expressed at the first larval stage (L1) in several cell types including hypodermis, muscle, neurons and seam cells (PubMed:11884032, PubMed:16122423, PubMed:16139228, PubMed:21471153, PubMed:26811380, PubMed:30956008, PubMed:31264582, PubMed:9054503). Also expressed in the tail tip and pharynx at the L1 stage (PubMed:26811380). Down-regulated at L2, and absent from L3 and L4 (PubMed:11884032, PubMed:16122423, PubMed:16139228, PubMed:21471153, PubMed:26811380, PubMed:30956008, PubMed:31264582, PubMed:9054503).</text>
</comment>
<comment type="induction">
    <text evidence="5 8 9 25">Negatively regulated by the miRNA lin-4 which causes degradation of the mRNA encoding this protein. This requires a lin-4 complementary element (LCE) in the 3'-UTR of the mRNA encoding this protein. Also negatively regulated independent of lin-4 and this is counteracted by the action of lin-14. Positively regulated by TGF-beta signaling.</text>
</comment>
<comment type="PTM">
    <text evidence="13 17">Cleavage by caspase ced-3 during larval development probably induces lin-28 degradation.</text>
</comment>
<comment type="disruption phenotype">
    <text evidence="13 15 18">RNAi-mediated knockdown in a ced-3 and ain-1 double mutant background reduces the percentage of animals with developmental defects including impaired egg-laying and production of ectopic seam cells. RNAi-mediated knockdown results in the precocious onset of tail tip retraction at the L3 larval stage resulting in over-retracted and shortened adult male tails (also known as the Ore phenotype) (PubMed:26811380, PubMed:30956008). RNAi-mediated knockdown suppresses the male tail tip morphogenesis defects of mutants for the long non-coding RNA lep-5 (PubMed:30956008).</text>
</comment>
<comment type="similarity">
    <text evidence="28">Belongs to the lin-28 family.</text>
</comment>
<name>LIN28_CAEEL</name>
<feature type="chain" id="PRO_0000253799" description="Protein lin-28">
    <location>
        <begin position="1"/>
        <end position="227"/>
    </location>
</feature>
<feature type="domain" description="CSD">
    <location>
        <begin position="52"/>
        <end position="120"/>
    </location>
</feature>
<feature type="zinc finger region" description="CCHC-type 1" evidence="2">
    <location>
        <begin position="143"/>
        <end position="160"/>
    </location>
</feature>
<feature type="zinc finger region" description="CCHC-type 2" evidence="2">
    <location>
        <begin position="166"/>
        <end position="183"/>
    </location>
</feature>
<feature type="region of interest" description="Disordered" evidence="3">
    <location>
        <begin position="1"/>
        <end position="27"/>
    </location>
</feature>
<feature type="region of interest" description="Disordered" evidence="3">
    <location>
        <begin position="181"/>
        <end position="227"/>
    </location>
</feature>
<feature type="compositionally biased region" description="Polar residues" evidence="3">
    <location>
        <begin position="1"/>
        <end position="17"/>
    </location>
</feature>
<feature type="binding site" evidence="1">
    <location>
        <position position="144"/>
    </location>
    <ligand>
        <name>Zn(2+)</name>
        <dbReference type="ChEBI" id="CHEBI:29105"/>
        <label>1</label>
    </ligand>
</feature>
<feature type="binding site" evidence="1">
    <location>
        <position position="147"/>
    </location>
    <ligand>
        <name>Zn(2+)</name>
        <dbReference type="ChEBI" id="CHEBI:29105"/>
        <label>1</label>
    </ligand>
</feature>
<feature type="binding site" evidence="1">
    <location>
        <position position="153"/>
    </location>
    <ligand>
        <name>Zn(2+)</name>
        <dbReference type="ChEBI" id="CHEBI:29105"/>
        <label>1</label>
    </ligand>
</feature>
<feature type="binding site" evidence="1">
    <location>
        <position position="158"/>
    </location>
    <ligand>
        <name>Zn(2+)</name>
        <dbReference type="ChEBI" id="CHEBI:29105"/>
        <label>1</label>
    </ligand>
</feature>
<feature type="binding site" evidence="1">
    <location>
        <position position="168"/>
    </location>
    <ligand>
        <name>Zn(2+)</name>
        <dbReference type="ChEBI" id="CHEBI:29105"/>
        <label>2</label>
    </ligand>
</feature>
<feature type="binding site" evidence="1">
    <location>
        <position position="171"/>
    </location>
    <ligand>
        <name>Zn(2+)</name>
        <dbReference type="ChEBI" id="CHEBI:29105"/>
        <label>2</label>
    </ligand>
</feature>
<feature type="binding site" evidence="1">
    <location>
        <position position="176"/>
    </location>
    <ligand>
        <name>Zn(2+)</name>
        <dbReference type="ChEBI" id="CHEBI:29105"/>
        <label>2</label>
    </ligand>
</feature>
<feature type="binding site" evidence="1">
    <location>
        <position position="181"/>
    </location>
    <ligand>
        <name>Zn(2+)</name>
        <dbReference type="ChEBI" id="CHEBI:29105"/>
        <label>2</label>
    </ligand>
</feature>
<feature type="site" description="Cleavage; by ced-3" evidence="13 17">
    <location>
        <begin position="31"/>
        <end position="32"/>
    </location>
</feature>
<feature type="splice variant" id="VSP_021122" description="In isoform b." evidence="28">
    <original>MSTVVSEGRNDGNNRY</original>
    <variation>MIEAALENPVPIKSQL</variation>
    <location>
        <begin position="1"/>
        <end position="16"/>
    </location>
</feature>
<feature type="splice variant" id="VSP_021123" description="In isoform b." evidence="28">
    <location>
        <begin position="17"/>
        <end position="47"/>
    </location>
</feature>
<feature type="mutagenesis site" description="Constitutively active and results in reduced lin-28 protein levels. Rescues the seam cell number and vulval developmental defects of the lin-28 n719 loss of function mutant." evidence="17">
    <location>
        <begin position="2"/>
        <end position="32"/>
    </location>
</feature>
<feature type="mutagenesis site" description="Reduced ced-3-mediated cleavage in vitro." evidence="13">
    <original>D</original>
    <variation>A</variation>
    <location>
        <position position="11"/>
    </location>
</feature>
<feature type="mutagenesis site" description="Reduced ced-3-mediated cleavage in vitro." evidence="13">
    <original>E</original>
    <variation>A</variation>
    <location>
        <position position="23"/>
    </location>
</feature>
<feature type="mutagenesis site" description="Reduced ced-3-mediated cleavage in vitro." evidence="13">
    <original>D</original>
    <variation>A</variation>
    <location>
        <position position="24"/>
    </location>
</feature>
<feature type="mutagenesis site" description="Loss of ced-3-mediated cleavage in vitro. Partially prevents reduction of lin-28 protein levels in vivo. About 20 percent of mutants fail to reach adulthood. Defects in alae morphology." evidence="13 17">
    <original>D</original>
    <variation>A</variation>
    <location>
        <position position="31"/>
    </location>
</feature>
<feature type="mutagenesis site" description="Loss of ced-3-mediated cleavage in vitro. Prevents reduction of lin-28 protein levels in vitro." evidence="17">
    <original>N</original>
    <variation>M</variation>
    <location>
        <position position="32"/>
    </location>
</feature>
<feature type="mutagenesis site" description="In n1119; loss of function." evidence="25">
    <original>G</original>
    <variation>S</variation>
    <location>
        <position position="55"/>
    </location>
</feature>
<feature type="mutagenesis site" description="In ga73; when associated with Q-91." evidence="25">
    <original>M</original>
    <variation>I</variation>
    <location>
        <position position="87"/>
    </location>
</feature>
<feature type="mutagenesis site" description="In ga73; when associated with I-87." evidence="25">
    <original>R</original>
    <variation>Q</variation>
    <location>
        <position position="91"/>
    </location>
</feature>
<feature type="mutagenesis site" description="In ma157." evidence="25">
    <original>G</original>
    <variation>E</variation>
    <location>
        <position position="128"/>
    </location>
</feature>
<feature type="mutagenesis site" description="In sy283." evidence="25">
    <original>G</original>
    <variation>R</variation>
    <location>
        <position position="128"/>
    </location>
</feature>
<feature type="mutagenesis site" description="In ve9." evidence="25">
    <original>P</original>
    <variation>S</variation>
    <location>
        <position position="133"/>
    </location>
</feature>
<dbReference type="EMBL" id="U75912">
    <property type="protein sequence ID" value="AAC47476.1"/>
    <property type="molecule type" value="mRNA"/>
</dbReference>
<dbReference type="EMBL" id="U75915">
    <property type="protein sequence ID" value="AAB49759.1"/>
    <property type="molecule type" value="Genomic_DNA"/>
</dbReference>
<dbReference type="EMBL" id="BX284601">
    <property type="protein sequence ID" value="CAB61008.1"/>
    <property type="molecule type" value="Genomic_DNA"/>
</dbReference>
<dbReference type="EMBL" id="BX284601">
    <property type="protein sequence ID" value="CAB61009.1"/>
    <property type="molecule type" value="Genomic_DNA"/>
</dbReference>
<dbReference type="RefSeq" id="NP_001021085.1">
    <molecule id="P92186-1"/>
    <property type="nucleotide sequence ID" value="NM_001025914.6"/>
</dbReference>
<dbReference type="RefSeq" id="NP_492281.2">
    <molecule id="P92186-2"/>
    <property type="nucleotide sequence ID" value="NM_059880.7"/>
</dbReference>
<dbReference type="SMR" id="P92186"/>
<dbReference type="BioGRID" id="38059">
    <property type="interactions" value="7"/>
</dbReference>
<dbReference type="ComplexPortal" id="CPX-5081">
    <property type="entry name" value="lep-2-lep-5-lin-28 ubiquitin ligase complex"/>
</dbReference>
<dbReference type="DIP" id="DIP-40151N"/>
<dbReference type="FunCoup" id="P92186">
    <property type="interactions" value="252"/>
</dbReference>
<dbReference type="IntAct" id="P92186">
    <property type="interactions" value="4"/>
</dbReference>
<dbReference type="STRING" id="6239.F02E9.2a.1"/>
<dbReference type="iPTMnet" id="P92186"/>
<dbReference type="PaxDb" id="6239-F02E9.2a"/>
<dbReference type="PeptideAtlas" id="P92186"/>
<dbReference type="EnsemblMetazoa" id="F02E9.2a.1">
    <molecule id="P92186-1"/>
    <property type="protein sequence ID" value="F02E9.2a.1"/>
    <property type="gene ID" value="WBGene00003014"/>
</dbReference>
<dbReference type="EnsemblMetazoa" id="F02E9.2b.1">
    <molecule id="P92186-2"/>
    <property type="protein sequence ID" value="F02E9.2b.1"/>
    <property type="gene ID" value="WBGene00003014"/>
</dbReference>
<dbReference type="GeneID" id="172626"/>
<dbReference type="KEGG" id="cel:CELE_F02E9.2"/>
<dbReference type="UCSC" id="F02E9.2a">
    <molecule id="P92186-1"/>
    <property type="organism name" value="c. elegans"/>
</dbReference>
<dbReference type="AGR" id="WB:WBGene00003014"/>
<dbReference type="CTD" id="38639"/>
<dbReference type="WormBase" id="F02E9.2a">
    <molecule id="P92186-1"/>
    <property type="protein sequence ID" value="CE24879"/>
    <property type="gene ID" value="WBGene00003014"/>
    <property type="gene designation" value="lin-28"/>
</dbReference>
<dbReference type="WormBase" id="F02E9.2b">
    <molecule id="P92186-2"/>
    <property type="protein sequence ID" value="CE24880"/>
    <property type="gene ID" value="WBGene00003014"/>
    <property type="gene designation" value="lin-28"/>
</dbReference>
<dbReference type="eggNOG" id="KOG3070">
    <property type="taxonomic scope" value="Eukaryota"/>
</dbReference>
<dbReference type="InParanoid" id="P92186"/>
<dbReference type="OMA" id="RCYNCAG"/>
<dbReference type="OrthoDB" id="422005at2759"/>
<dbReference type="PhylomeDB" id="P92186"/>
<dbReference type="PRO" id="PR:P92186"/>
<dbReference type="Proteomes" id="UP000001940">
    <property type="component" value="Chromosome I"/>
</dbReference>
<dbReference type="Bgee" id="WBGene00003014">
    <property type="expression patterns" value="Expressed in pharyngeal muscle cell (C elegans) and 4 other cell types or tissues"/>
</dbReference>
<dbReference type="GO" id="GO:0005737">
    <property type="term" value="C:cytoplasm"/>
    <property type="evidence" value="ECO:0000314"/>
    <property type="project" value="UniProtKB"/>
</dbReference>
<dbReference type="GO" id="GO:0005634">
    <property type="term" value="C:nucleus"/>
    <property type="evidence" value="ECO:0000314"/>
    <property type="project" value="WormBase"/>
</dbReference>
<dbReference type="GO" id="GO:0000151">
    <property type="term" value="C:ubiquitin ligase complex"/>
    <property type="evidence" value="ECO:0000303"/>
    <property type="project" value="ComplexPortal"/>
</dbReference>
<dbReference type="GO" id="GO:0019899">
    <property type="term" value="F:enzyme binding"/>
    <property type="evidence" value="ECO:0000353"/>
    <property type="project" value="WormBase"/>
</dbReference>
<dbReference type="GO" id="GO:0003730">
    <property type="term" value="F:mRNA 3'-UTR binding"/>
    <property type="evidence" value="ECO:0000314"/>
    <property type="project" value="WormBase"/>
</dbReference>
<dbReference type="GO" id="GO:0003729">
    <property type="term" value="F:mRNA binding"/>
    <property type="evidence" value="ECO:0000314"/>
    <property type="project" value="WormBase"/>
</dbReference>
<dbReference type="GO" id="GO:1990715">
    <property type="term" value="F:mRNA CDS binding"/>
    <property type="evidence" value="ECO:0000314"/>
    <property type="project" value="WormBase"/>
</dbReference>
<dbReference type="GO" id="GO:0070883">
    <property type="term" value="F:pre-miRNA binding"/>
    <property type="evidence" value="ECO:0000353"/>
    <property type="project" value="WormBase"/>
</dbReference>
<dbReference type="GO" id="GO:0070878">
    <property type="term" value="F:primary miRNA binding"/>
    <property type="evidence" value="ECO:0000314"/>
    <property type="project" value="WormBase"/>
</dbReference>
<dbReference type="GO" id="GO:0008270">
    <property type="term" value="F:zinc ion binding"/>
    <property type="evidence" value="ECO:0007669"/>
    <property type="project" value="UniProtKB-KW"/>
</dbReference>
<dbReference type="GO" id="GO:0001708">
    <property type="term" value="P:cell fate specification"/>
    <property type="evidence" value="ECO:0000315"/>
    <property type="project" value="UniProtKB"/>
</dbReference>
<dbReference type="GO" id="GO:0010629">
    <property type="term" value="P:negative regulation of gene expression"/>
    <property type="evidence" value="ECO:0000315"/>
    <property type="project" value="UniProtKB"/>
</dbReference>
<dbReference type="GO" id="GO:2000635">
    <property type="term" value="P:negative regulation of primary miRNA processing"/>
    <property type="evidence" value="ECO:0000315"/>
    <property type="project" value="WormBase"/>
</dbReference>
<dbReference type="GO" id="GO:0002119">
    <property type="term" value="P:nematode larval development"/>
    <property type="evidence" value="ECO:0000303"/>
    <property type="project" value="ComplexPortal"/>
</dbReference>
<dbReference type="GO" id="GO:0042551">
    <property type="term" value="P:neuron maturation"/>
    <property type="evidence" value="ECO:0000303"/>
    <property type="project" value="ComplexPortal"/>
</dbReference>
<dbReference type="GO" id="GO:0031054">
    <property type="term" value="P:pre-miRNA processing"/>
    <property type="evidence" value="ECO:0000314"/>
    <property type="project" value="WormBase"/>
</dbReference>
<dbReference type="GO" id="GO:0042659">
    <property type="term" value="P:regulation of cell fate specification"/>
    <property type="evidence" value="ECO:0000316"/>
    <property type="project" value="UniProtKB"/>
</dbReference>
<dbReference type="GO" id="GO:0040034">
    <property type="term" value="P:regulation of development, heterochronic"/>
    <property type="evidence" value="ECO:0000315"/>
    <property type="project" value="WormBase"/>
</dbReference>
<dbReference type="GO" id="GO:0007549">
    <property type="term" value="P:sex-chromosome dosage compensation"/>
    <property type="evidence" value="ECO:0000316"/>
    <property type="project" value="WormBase"/>
</dbReference>
<dbReference type="GO" id="GO:0006511">
    <property type="term" value="P:ubiquitin-dependent protein catabolic process"/>
    <property type="evidence" value="ECO:0000303"/>
    <property type="project" value="ComplexPortal"/>
</dbReference>
<dbReference type="CDD" id="cd04458">
    <property type="entry name" value="CSP_CDS"/>
    <property type="match status" value="1"/>
</dbReference>
<dbReference type="Gene3D" id="2.40.50.140">
    <property type="entry name" value="Nucleic acid-binding proteins"/>
    <property type="match status" value="1"/>
</dbReference>
<dbReference type="Gene3D" id="4.10.60.10">
    <property type="entry name" value="Zinc finger, CCHC-type"/>
    <property type="match status" value="1"/>
</dbReference>
<dbReference type="InterPro" id="IPR011129">
    <property type="entry name" value="CSD"/>
</dbReference>
<dbReference type="InterPro" id="IPR002059">
    <property type="entry name" value="CSP_DNA-bd"/>
</dbReference>
<dbReference type="InterPro" id="IPR051373">
    <property type="entry name" value="Lin-28_RNA-binding"/>
</dbReference>
<dbReference type="InterPro" id="IPR012340">
    <property type="entry name" value="NA-bd_OB-fold"/>
</dbReference>
<dbReference type="InterPro" id="IPR001878">
    <property type="entry name" value="Znf_CCHC"/>
</dbReference>
<dbReference type="InterPro" id="IPR036875">
    <property type="entry name" value="Znf_CCHC_sf"/>
</dbReference>
<dbReference type="PANTHER" id="PTHR46109">
    <property type="entry name" value="PROTEIN LIN-28"/>
    <property type="match status" value="1"/>
</dbReference>
<dbReference type="PANTHER" id="PTHR46109:SF1">
    <property type="entry name" value="PROTEIN LIN-28 HOMOLOG"/>
    <property type="match status" value="1"/>
</dbReference>
<dbReference type="Pfam" id="PF00313">
    <property type="entry name" value="CSD"/>
    <property type="match status" value="1"/>
</dbReference>
<dbReference type="Pfam" id="PF00098">
    <property type="entry name" value="zf-CCHC"/>
    <property type="match status" value="1"/>
</dbReference>
<dbReference type="PRINTS" id="PR00050">
    <property type="entry name" value="COLDSHOCK"/>
</dbReference>
<dbReference type="SMART" id="SM00357">
    <property type="entry name" value="CSP"/>
    <property type="match status" value="1"/>
</dbReference>
<dbReference type="SMART" id="SM00343">
    <property type="entry name" value="ZnF_C2HC"/>
    <property type="match status" value="2"/>
</dbReference>
<dbReference type="SUPFAM" id="SSF50249">
    <property type="entry name" value="Nucleic acid-binding proteins"/>
    <property type="match status" value="1"/>
</dbReference>
<dbReference type="SUPFAM" id="SSF57756">
    <property type="entry name" value="Retrovirus zinc finger-like domains"/>
    <property type="match status" value="1"/>
</dbReference>
<dbReference type="PROSITE" id="PS51857">
    <property type="entry name" value="CSD_2"/>
    <property type="match status" value="1"/>
</dbReference>
<dbReference type="PROSITE" id="PS50158">
    <property type="entry name" value="ZF_CCHC"/>
    <property type="match status" value="1"/>
</dbReference>
<protein>
    <recommendedName>
        <fullName evidence="28">Protein lin-28</fullName>
    </recommendedName>
    <alternativeName>
        <fullName evidence="29">Abnormal cell lineage protein 28</fullName>
    </alternativeName>
</protein>
<organism>
    <name type="scientific">Caenorhabditis elegans</name>
    <dbReference type="NCBI Taxonomy" id="6239"/>
    <lineage>
        <taxon>Eukaryota</taxon>
        <taxon>Metazoa</taxon>
        <taxon>Ecdysozoa</taxon>
        <taxon>Nematoda</taxon>
        <taxon>Chromadorea</taxon>
        <taxon>Rhabditida</taxon>
        <taxon>Rhabditina</taxon>
        <taxon>Rhabditomorpha</taxon>
        <taxon>Rhabditoidea</taxon>
        <taxon>Rhabditidae</taxon>
        <taxon>Peloderinae</taxon>
        <taxon>Caenorhabditis</taxon>
    </lineage>
</organism>
<evidence type="ECO:0000250" key="1"/>
<evidence type="ECO:0000255" key="2">
    <source>
        <dbReference type="PROSITE-ProRule" id="PRU00047"/>
    </source>
</evidence>
<evidence type="ECO:0000256" key="3">
    <source>
        <dbReference type="SAM" id="MobiDB-lite"/>
    </source>
</evidence>
<evidence type="ECO:0000269" key="4">
    <source>
    </source>
</evidence>
<evidence type="ECO:0000269" key="5">
    <source>
    </source>
</evidence>
<evidence type="ECO:0000269" key="6">
    <source>
    </source>
</evidence>
<evidence type="ECO:0000269" key="7">
    <source>
    </source>
</evidence>
<evidence type="ECO:0000269" key="8">
    <source>
    </source>
</evidence>
<evidence type="ECO:0000269" key="9">
    <source>
    </source>
</evidence>
<evidence type="ECO:0000269" key="10">
    <source>
    </source>
</evidence>
<evidence type="ECO:0000269" key="11">
    <source>
    </source>
</evidence>
<evidence type="ECO:0000269" key="12">
    <source>
    </source>
</evidence>
<evidence type="ECO:0000269" key="13">
    <source>
    </source>
</evidence>
<evidence type="ECO:0000269" key="14">
    <source>
    </source>
</evidence>
<evidence type="ECO:0000269" key="15">
    <source>
    </source>
</evidence>
<evidence type="ECO:0000269" key="16">
    <source>
    </source>
</evidence>
<evidence type="ECO:0000269" key="17">
    <source>
    </source>
</evidence>
<evidence type="ECO:0000269" key="18">
    <source>
    </source>
</evidence>
<evidence type="ECO:0000269" key="19">
    <source>
    </source>
</evidence>
<evidence type="ECO:0000269" key="20">
    <source>
    </source>
</evidence>
<evidence type="ECO:0000269" key="21">
    <source>
    </source>
</evidence>
<evidence type="ECO:0000269" key="22">
    <source>
    </source>
</evidence>
<evidence type="ECO:0000269" key="23">
    <source>
    </source>
</evidence>
<evidence type="ECO:0000269" key="24">
    <source>
    </source>
</evidence>
<evidence type="ECO:0000269" key="25">
    <source>
    </source>
</evidence>
<evidence type="ECO:0000269" key="26">
    <source>
    </source>
</evidence>
<evidence type="ECO:0000269" key="27">
    <source>
    </source>
</evidence>
<evidence type="ECO:0000305" key="28"/>
<evidence type="ECO:0000312" key="29">
    <source>
        <dbReference type="WormBase" id="F02E9.2a"/>
    </source>
</evidence>
<evidence type="ECO:0000312" key="30">
    <source>
        <dbReference type="WormBase" id="F02E9.2b"/>
    </source>
</evidence>
<proteinExistence type="evidence at protein level"/>
<sequence>MSTVVSEGRNDGNNRYSPQDEVEDRLPDVVDNRLTENMRVPSFERLPSPTPRYFGSCKWFNVSKGYGFVIDDITGEDLFVHQSNLNMQGFRSLDEGERVSYYIQERSNGKGREAYAVSGEVEGQGLKGSRIHPLGRKKAVSLRCFRCGKFATHKAKSCPNVKTDAKVCYTCGSEEHVSSICPERRRKHRPEQVAAEEAEAARMAAEKSSPTTSDDDIREKNSNSSDE</sequence>
<reference key="1">
    <citation type="journal article" date="1997" name="Cell">
        <title>The cold shock domain protein LIN-28 controls developmental timing in C. elegans and is regulated by the lin-4 RNA.</title>
        <authorList>
            <person name="Moss E.G."/>
            <person name="Lee R.C."/>
            <person name="Ambros V."/>
        </authorList>
    </citation>
    <scope>NUCLEOTIDE SEQUENCE [GENOMIC DNA / MRNA] (ISOFORM A)</scope>
    <scope>FUNCTION</scope>
    <scope>SUBCELLULAR LOCATION</scope>
    <scope>DEVELOPMENTAL STAGE</scope>
    <scope>INDUCTION</scope>
    <scope>MUTAGENESIS OF GLY-55; MET-87; ARG-91; GLY-128 AND PRO-133</scope>
    <source>
        <strain>Bristol N2</strain>
    </source>
</reference>
<reference key="2">
    <citation type="journal article" date="1998" name="Science">
        <title>Genome sequence of the nematode C. elegans: a platform for investigating biology.</title>
        <authorList>
            <consortium name="The C. elegans sequencing consortium"/>
        </authorList>
    </citation>
    <scope>NUCLEOTIDE SEQUENCE [LARGE SCALE GENOMIC DNA]</scope>
    <source>
        <strain>Bristol N2</strain>
    </source>
</reference>
<reference key="3">
    <citation type="journal article" date="1984" name="Science">
        <title>Heterochronic mutants of the nematode Caenorhabditis elegans.</title>
        <authorList>
            <person name="Ambros V."/>
            <person name="Horvitz H.R."/>
        </authorList>
    </citation>
    <scope>FUNCTION</scope>
</reference>
<reference key="4">
    <citation type="journal article" date="1989" name="Cell">
        <title>A hierarchy of regulatory genes controls a larva-to-adult developmental switch in C. elegans.</title>
        <authorList>
            <person name="Ambros V."/>
        </authorList>
    </citation>
    <scope>FUNCTION</scope>
</reference>
<reference key="5">
    <citation type="journal article" date="1989" name="Genes Dev.">
        <title>Heterochronic genes control the stage-specific initiation and expression of the dauer larva developmental program in Caenorhabditis elegans.</title>
        <authorList>
            <person name="Liu Z.C."/>
            <person name="Ambros V."/>
        </authorList>
    </citation>
    <scope>FUNCTION</scope>
</reference>
<reference key="6">
    <citation type="journal article" date="1991" name="Genes Dev.">
        <title>Temporal regulation of lin-14 by the antagonistic action of two other heterochronic genes, lin-4 and lin-28.</title>
        <authorList>
            <person name="Arasu P."/>
            <person name="Wightman B."/>
            <person name="Ruvkun G."/>
        </authorList>
    </citation>
    <scope>FUNCTION</scope>
</reference>
<reference key="7">
    <citation type="journal article" date="1995" name="Development">
        <title>The Caenorhabditis elegans heterochronic gene pathway controls stage-specific transcription of collagen genes.</title>
        <authorList>
            <person name="Liu Z.C."/>
            <person name="Kirch S."/>
            <person name="Ambros V."/>
        </authorList>
    </citation>
    <scope>FUNCTION</scope>
</reference>
<reference key="8">
    <citation type="journal article" date="1996" name="Cell">
        <title>Heterochronic genes control cell cycle progress and developmental competence of C. elegans vulva precursor cells.</title>
        <authorList>
            <person name="Euling S."/>
            <person name="Ambros V."/>
        </authorList>
    </citation>
    <scope>FUNCTION</scope>
</reference>
<reference key="9">
    <citation type="journal article" date="1996" name="Development">
        <title>Reversal of cell fate determination in Caenorhabditis elegans vulval development.</title>
        <authorList>
            <person name="Euling S."/>
            <person name="Ambros V."/>
        </authorList>
    </citation>
    <scope>FUNCTION</scope>
</reference>
<reference key="10">
    <citation type="journal article" date="1996" name="Development">
        <title>Stage-specific accumulation of the terminal differentiation factor LIN-29 during Caenorhabditis elegans development.</title>
        <authorList>
            <person name="Bettinger J.C."/>
            <person name="Lee K."/>
            <person name="Rougvie A.E."/>
        </authorList>
    </citation>
    <scope>FUNCTION</scope>
</reference>
<reference key="11">
    <citation type="journal article" date="1998" name="Development">
        <title>daf-12 regulates developmental age and the dauer alternative in Caenorhabditis elegans.</title>
        <authorList>
            <person name="Antebi A."/>
            <person name="Culotti J.G."/>
            <person name="Hedgecock E.M."/>
        </authorList>
    </citation>
    <scope>FUNCTION</scope>
</reference>
<reference key="12">
    <citation type="journal article" date="1998" name="Genetics">
        <title>Identification of heterochronic mutants in Caenorhabditis elegans. Temporal misexpression of a collagen::green fluorescent protein fusion gene.</title>
        <authorList>
            <person name="Abrahante J.E."/>
            <person name="Miller E.A."/>
            <person name="Rougvie A.E."/>
        </authorList>
    </citation>
    <scope>FUNCTION</scope>
</reference>
<reference key="13">
    <citation type="journal article" date="2000" name="Nature">
        <title>The 21-nucleotide let-7 RNA regulates developmental timing in Caenorhabditis elegans.</title>
        <authorList>
            <person name="Reinhart B.J."/>
            <person name="Slack F.J."/>
            <person name="Basson M."/>
            <person name="Pasquinelli A.E."/>
            <person name="Bettinger J.C."/>
            <person name="Rougvie A.E."/>
            <person name="Horvitz H.R."/>
            <person name="Ruvkun G."/>
        </authorList>
    </citation>
    <scope>FUNCTION</scope>
</reference>
<reference key="14">
    <citation type="journal article" date="2002" name="Dev. Biol.">
        <title>Two genetic circuits repress the Caenorhabditis elegans heterochronic gene lin-28 after translation initiation.</title>
        <authorList>
            <person name="Seggerson K."/>
            <person name="Tang L."/>
            <person name="Moss E.G."/>
        </authorList>
    </citation>
    <scope>DEVELOPMENTAL STAGE</scope>
    <scope>INDUCTION</scope>
</reference>
<reference key="15">
    <citation type="journal article" date="2003" name="Dev. Biol.">
        <title>The time of appearance of the C. elegans let-7 microRNA is transcriptionally controlled utilizing a temporal regulatory element in its promoter.</title>
        <authorList>
            <person name="Johnson S.M."/>
            <person name="Lin S.-Y."/>
            <person name="Slack F.J."/>
        </authorList>
    </citation>
    <scope>FUNCTION</scope>
</reference>
<reference key="16">
    <citation type="journal article" date="2004" name="BMC Dev. Biol.">
        <title>Regulation of signaling genes by TGFbeta during entry into dauer diapause in C. elegans.</title>
        <authorList>
            <person name="Liu T."/>
            <person name="Zimmerman K.K."/>
            <person name="Patterson G.I."/>
        </authorList>
    </citation>
    <scope>INDUCTION</scope>
</reference>
<reference key="17">
    <citation type="journal article" date="2004" name="Development">
        <title>The C. elegans heterochronic gene lin-46 affects developmental timing at two larval stages and encodes a relative of the scaffolding protein gephyrin.</title>
        <authorList>
            <person name="Pepper A.-S."/>
            <person name="McCane J.E."/>
            <person name="Kemper K."/>
            <person name="Yeung D.A."/>
            <person name="Lee R.C."/>
            <person name="Ambros V."/>
            <person name="Moss E.G."/>
        </authorList>
    </citation>
    <scope>FUNCTION</scope>
</reference>
<reference key="18">
    <citation type="journal article" date="2005" name="Cell">
        <title>Regulation by let-7 and lin-4 miRNAs results in target mRNA degradation.</title>
        <authorList>
            <person name="Bagga S."/>
            <person name="Bracht J."/>
            <person name="Hunter S."/>
            <person name="Massirer K."/>
            <person name="Holtz J."/>
            <person name="Eachus R."/>
            <person name="Pasquinelli A.E."/>
        </authorList>
    </citation>
    <scope>DEVELOPMENTAL STAGE</scope>
    <scope>INDUCTION</scope>
</reference>
<reference key="19">
    <citation type="journal article" date="2005" name="Dev. Cell">
        <title>The let-7 MicroRNA family members mir-48, mir-84, and mir-241 function together to regulate developmental timing in Caenorhabditis elegans.</title>
        <authorList>
            <person name="Abbott A.L."/>
            <person name="Alvarez-Saavedra E."/>
            <person name="Miska E.A."/>
            <person name="Lau N.C."/>
            <person name="Bartel D.P."/>
            <person name="Horvitz H.R."/>
            <person name="Ambros V."/>
        </authorList>
    </citation>
    <scope>FUNCTION</scope>
    <scope>DEVELOPMENTAL STAGE</scope>
</reference>
<reference key="20">
    <citation type="journal article" date="2011" name="Development">
        <title>The zinc-finger protein SEA-2 regulates larval developmental timing and adult lifespan in C. elegans.</title>
        <authorList>
            <person name="Huang X."/>
            <person name="Zhang H."/>
            <person name="Zhang H."/>
        </authorList>
    </citation>
    <scope>FUNCTION</scope>
    <scope>DEVELOPMENTAL STAGE</scope>
</reference>
<reference key="21">
    <citation type="journal article" date="2014" name="Elife">
        <title>CED-3 caspase acts with miRNAs to regulate non-apoptotic gene expression dynamics for robust development in C. elegans.</title>
        <authorList>
            <person name="Weaver B.P."/>
            <person name="Zabinsky R."/>
            <person name="Weaver Y.M."/>
            <person name="Lee E.S."/>
            <person name="Xue D."/>
            <person name="Han M."/>
        </authorList>
    </citation>
    <scope>PROTEOLYTIC CLEAVAGE</scope>
    <scope>DISRUPTION PHENOTYPE</scope>
    <scope>MUTAGENESIS OF ASP-11; GLU-23; ASP-24 AND ASP-31</scope>
</reference>
<reference key="22">
    <citation type="journal article" date="2016" name="Development">
        <title>Makorin ortholog LEP-2 regulates LIN-28 stability to promote the juvenile-to-adult transition in Caenorhabditis elegans.</title>
        <authorList>
            <person name="Herrera R.A."/>
            <person name="Kiontke K."/>
            <person name="Fitch D.H."/>
        </authorList>
    </citation>
    <scope>FUNCTION</scope>
    <scope>SUBCELLULAR LOCATION</scope>
    <scope>DEVELOPMENTAL STAGE</scope>
    <scope>DISRUPTION PHENOTYPE</scope>
</reference>
<reference key="23">
    <citation type="journal article" date="2017" name="Dev. Cell">
        <title>Coupled Caspase and N-End Rule Ligase Activities Allow Recognition and Degradation of Pluripotency Factor LIN-28 during Non-Apoptotic Development.</title>
        <authorList>
            <person name="Weaver B.P."/>
            <person name="Weaver Y.M."/>
            <person name="Mitani S."/>
            <person name="Han M."/>
        </authorList>
    </citation>
    <scope>FUNCTION</scope>
    <scope>PROTEOLYTIC CLEAVAGE</scope>
    <scope>MUTAGENESIS OF 2-SER--ASN-32; ASP-31 AND ASN-32</scope>
</reference>
<reference key="24">
    <citation type="journal article" date="2019" name="Elife">
        <title>The Makorin lep-2 and the lncRNA lep-5 regulate lin-28 to schedule sexual maturation of the C. elegans nervous system.</title>
        <authorList>
            <person name="Lawson H."/>
            <person name="Vuong E."/>
            <person name="Miller R.M."/>
            <person name="Kiontke K."/>
            <person name="Fitch D.H."/>
            <person name="Portman D.S."/>
        </authorList>
    </citation>
    <scope>FUNCTION</scope>
    <scope>DEVELOPMENTAL STAGE</scope>
</reference>
<reference key="25">
    <citation type="journal article" date="2019" name="Dev. Cell">
        <title>The Long Non-Coding RNA lep-5 Promotes the Juvenile-to-Adult Transition by Destabilizing LIN-28.</title>
        <authorList>
            <person name="Kiontke K.C."/>
            <person name="Herrera R.A."/>
            <person name="Vuong E."/>
            <person name="Luo J."/>
            <person name="Schwarz E.M."/>
            <person name="Fitch D.H.A."/>
            <person name="Portman D.S."/>
        </authorList>
    </citation>
    <scope>FUNCTION</scope>
    <scope>IDENTIFICATION IN COMPLEX WITH LEP-2</scope>
    <scope>DEVELOPMENTAL STAGE</scope>
    <scope>DISRUPTION PHENOTYPE</scope>
</reference>